<feature type="chain" id="PRO_0000403606" description="Flap endonuclease 1">
    <location>
        <begin position="1"/>
        <end position="389"/>
    </location>
</feature>
<feature type="region of interest" description="N-domain">
    <location>
        <begin position="1"/>
        <end position="105"/>
    </location>
</feature>
<feature type="region of interest" description="I-domain">
    <location>
        <begin position="134"/>
        <end position="265"/>
    </location>
</feature>
<feature type="region of interest" description="Interaction with PCNA" evidence="1">
    <location>
        <begin position="351"/>
        <end position="359"/>
    </location>
</feature>
<feature type="region of interest" description="Disordered" evidence="2">
    <location>
        <begin position="360"/>
        <end position="389"/>
    </location>
</feature>
<feature type="compositionally biased region" description="Basic and acidic residues" evidence="2">
    <location>
        <begin position="362"/>
        <end position="376"/>
    </location>
</feature>
<feature type="compositionally biased region" description="Basic residues" evidence="2">
    <location>
        <begin position="377"/>
        <end position="389"/>
    </location>
</feature>
<feature type="binding site" evidence="1">
    <location>
        <position position="34"/>
    </location>
    <ligand>
        <name>Mg(2+)</name>
        <dbReference type="ChEBI" id="CHEBI:18420"/>
        <label>1</label>
    </ligand>
</feature>
<feature type="binding site" evidence="1">
    <location>
        <position position="47"/>
    </location>
    <ligand>
        <name>DNA</name>
        <dbReference type="ChEBI" id="CHEBI:16991"/>
    </ligand>
</feature>
<feature type="binding site" evidence="1">
    <location>
        <position position="71"/>
    </location>
    <ligand>
        <name>DNA</name>
        <dbReference type="ChEBI" id="CHEBI:16991"/>
    </ligand>
</feature>
<feature type="binding site" evidence="1">
    <location>
        <position position="87"/>
    </location>
    <ligand>
        <name>Mg(2+)</name>
        <dbReference type="ChEBI" id="CHEBI:18420"/>
        <label>1</label>
    </ligand>
</feature>
<feature type="binding site" evidence="1">
    <location>
        <position position="170"/>
    </location>
    <ligand>
        <name>DNA</name>
        <dbReference type="ChEBI" id="CHEBI:16991"/>
    </ligand>
</feature>
<feature type="binding site" evidence="1">
    <location>
        <position position="170"/>
    </location>
    <ligand>
        <name>Mg(2+)</name>
        <dbReference type="ChEBI" id="CHEBI:18420"/>
        <label>1</label>
    </ligand>
</feature>
<feature type="binding site" evidence="1">
    <location>
        <position position="172"/>
    </location>
    <ligand>
        <name>Mg(2+)</name>
        <dbReference type="ChEBI" id="CHEBI:18420"/>
        <label>1</label>
    </ligand>
</feature>
<feature type="binding site" evidence="1">
    <location>
        <position position="191"/>
    </location>
    <ligand>
        <name>Mg(2+)</name>
        <dbReference type="ChEBI" id="CHEBI:18420"/>
        <label>2</label>
    </ligand>
</feature>
<feature type="binding site" evidence="1">
    <location>
        <position position="193"/>
    </location>
    <ligand>
        <name>Mg(2+)</name>
        <dbReference type="ChEBI" id="CHEBI:18420"/>
        <label>2</label>
    </ligand>
</feature>
<feature type="binding site" evidence="1">
    <location>
        <position position="243"/>
    </location>
    <ligand>
        <name>DNA</name>
        <dbReference type="ChEBI" id="CHEBI:16991"/>
    </ligand>
</feature>
<feature type="binding site" evidence="1">
    <location>
        <position position="245"/>
    </location>
    <ligand>
        <name>DNA</name>
        <dbReference type="ChEBI" id="CHEBI:16991"/>
    </ligand>
</feature>
<feature type="binding site" evidence="1">
    <location>
        <position position="245"/>
    </location>
    <ligand>
        <name>Mg(2+)</name>
        <dbReference type="ChEBI" id="CHEBI:18420"/>
        <label>2</label>
    </ligand>
</feature>
<keyword id="KW-0227">DNA damage</keyword>
<keyword id="KW-0234">DNA repair</keyword>
<keyword id="KW-0235">DNA replication</keyword>
<keyword id="KW-0255">Endonuclease</keyword>
<keyword id="KW-0269">Exonuclease</keyword>
<keyword id="KW-0378">Hydrolase</keyword>
<keyword id="KW-0460">Magnesium</keyword>
<keyword id="KW-0479">Metal-binding</keyword>
<keyword id="KW-0496">Mitochondrion</keyword>
<keyword id="KW-0540">Nuclease</keyword>
<keyword id="KW-0539">Nucleus</keyword>
<keyword id="KW-0597">Phosphoprotein</keyword>
<keyword id="KW-1185">Reference proteome</keyword>
<dbReference type="EC" id="3.1.-.-" evidence="1"/>
<dbReference type="EMBL" id="CR382132">
    <property type="protein sequence ID" value="CAG78455.1"/>
    <property type="molecule type" value="Genomic_DNA"/>
</dbReference>
<dbReference type="RefSeq" id="XP_505646.1">
    <property type="nucleotide sequence ID" value="XM_505646.1"/>
</dbReference>
<dbReference type="SMR" id="Q6C116"/>
<dbReference type="FunCoup" id="Q6C116">
    <property type="interactions" value="1086"/>
</dbReference>
<dbReference type="STRING" id="284591.Q6C116"/>
<dbReference type="EnsemblFungi" id="CAG78455">
    <property type="protein sequence ID" value="CAG78455"/>
    <property type="gene ID" value="YALI0_F20042g"/>
</dbReference>
<dbReference type="KEGG" id="yli:2908048"/>
<dbReference type="VEuPathDB" id="FungiDB:YALI0_F20042g"/>
<dbReference type="HOGENOM" id="CLU_032444_2_0_1"/>
<dbReference type="InParanoid" id="Q6C116"/>
<dbReference type="OMA" id="IQEVHID"/>
<dbReference type="OrthoDB" id="115867at4891"/>
<dbReference type="Proteomes" id="UP000001300">
    <property type="component" value="Chromosome F"/>
</dbReference>
<dbReference type="GO" id="GO:0005737">
    <property type="term" value="C:cytoplasm"/>
    <property type="evidence" value="ECO:0000318"/>
    <property type="project" value="GO_Central"/>
</dbReference>
<dbReference type="GO" id="GO:0005829">
    <property type="term" value="C:cytosol"/>
    <property type="evidence" value="ECO:0007669"/>
    <property type="project" value="EnsemblFungi"/>
</dbReference>
<dbReference type="GO" id="GO:0005739">
    <property type="term" value="C:mitochondrion"/>
    <property type="evidence" value="ECO:0007669"/>
    <property type="project" value="UniProtKB-SubCell"/>
</dbReference>
<dbReference type="GO" id="GO:0005730">
    <property type="term" value="C:nucleolus"/>
    <property type="evidence" value="ECO:0007669"/>
    <property type="project" value="UniProtKB-SubCell"/>
</dbReference>
<dbReference type="GO" id="GO:0005654">
    <property type="term" value="C:nucleoplasm"/>
    <property type="evidence" value="ECO:0007669"/>
    <property type="project" value="UniProtKB-SubCell"/>
</dbReference>
<dbReference type="GO" id="GO:0005634">
    <property type="term" value="C:nucleus"/>
    <property type="evidence" value="ECO:0000318"/>
    <property type="project" value="GO_Central"/>
</dbReference>
<dbReference type="GO" id="GO:0008409">
    <property type="term" value="F:5'-3' exonuclease activity"/>
    <property type="evidence" value="ECO:0000318"/>
    <property type="project" value="GO_Central"/>
</dbReference>
<dbReference type="GO" id="GO:0017108">
    <property type="term" value="F:5'-flap endonuclease activity"/>
    <property type="evidence" value="ECO:0000318"/>
    <property type="project" value="GO_Central"/>
</dbReference>
<dbReference type="GO" id="GO:0003677">
    <property type="term" value="F:DNA binding"/>
    <property type="evidence" value="ECO:0007669"/>
    <property type="project" value="UniProtKB-UniRule"/>
</dbReference>
<dbReference type="GO" id="GO:0000287">
    <property type="term" value="F:magnesium ion binding"/>
    <property type="evidence" value="ECO:0007669"/>
    <property type="project" value="UniProtKB-UniRule"/>
</dbReference>
<dbReference type="GO" id="GO:0006284">
    <property type="term" value="P:base-excision repair"/>
    <property type="evidence" value="ECO:0007669"/>
    <property type="project" value="UniProtKB-UniRule"/>
</dbReference>
<dbReference type="GO" id="GO:0043137">
    <property type="term" value="P:DNA replication, removal of RNA primer"/>
    <property type="evidence" value="ECO:0007669"/>
    <property type="project" value="UniProtKB-UniRule"/>
</dbReference>
<dbReference type="GO" id="GO:0006303">
    <property type="term" value="P:double-strand break repair via nonhomologous end joining"/>
    <property type="evidence" value="ECO:0007669"/>
    <property type="project" value="EnsemblFungi"/>
</dbReference>
<dbReference type="GO" id="GO:0007534">
    <property type="term" value="P:gene conversion at mating-type locus"/>
    <property type="evidence" value="ECO:0007669"/>
    <property type="project" value="EnsemblFungi"/>
</dbReference>
<dbReference type="GO" id="GO:0035753">
    <property type="term" value="P:maintenance of DNA trinucleotide repeats"/>
    <property type="evidence" value="ECO:0007669"/>
    <property type="project" value="EnsemblFungi"/>
</dbReference>
<dbReference type="CDD" id="cd09907">
    <property type="entry name" value="H3TH_FEN1-Euk"/>
    <property type="match status" value="1"/>
</dbReference>
<dbReference type="CDD" id="cd09867">
    <property type="entry name" value="PIN_FEN1"/>
    <property type="match status" value="1"/>
</dbReference>
<dbReference type="FunFam" id="1.10.150.20:FF:000009">
    <property type="entry name" value="Flap endonuclease 1"/>
    <property type="match status" value="1"/>
</dbReference>
<dbReference type="FunFam" id="3.40.50.1010:FF:000003">
    <property type="entry name" value="Flap endonuclease 1"/>
    <property type="match status" value="1"/>
</dbReference>
<dbReference type="Gene3D" id="1.10.150.20">
    <property type="entry name" value="5' to 3' exonuclease, C-terminal subdomain"/>
    <property type="match status" value="1"/>
</dbReference>
<dbReference type="Gene3D" id="3.40.50.1010">
    <property type="entry name" value="5'-nuclease"/>
    <property type="match status" value="1"/>
</dbReference>
<dbReference type="HAMAP" id="MF_00614">
    <property type="entry name" value="Fen"/>
    <property type="match status" value="1"/>
</dbReference>
<dbReference type="InterPro" id="IPR002421">
    <property type="entry name" value="5-3_exonuclease"/>
</dbReference>
<dbReference type="InterPro" id="IPR036279">
    <property type="entry name" value="5-3_exonuclease_C_sf"/>
</dbReference>
<dbReference type="InterPro" id="IPR023426">
    <property type="entry name" value="Flap_endonuc"/>
</dbReference>
<dbReference type="InterPro" id="IPR008918">
    <property type="entry name" value="HhH2"/>
</dbReference>
<dbReference type="InterPro" id="IPR029060">
    <property type="entry name" value="PIN-like_dom_sf"/>
</dbReference>
<dbReference type="InterPro" id="IPR006086">
    <property type="entry name" value="XPG-I_dom"/>
</dbReference>
<dbReference type="InterPro" id="IPR006084">
    <property type="entry name" value="XPG/Rad2"/>
</dbReference>
<dbReference type="InterPro" id="IPR019974">
    <property type="entry name" value="XPG_CS"/>
</dbReference>
<dbReference type="InterPro" id="IPR006085">
    <property type="entry name" value="XPG_DNA_repair_N"/>
</dbReference>
<dbReference type="PANTHER" id="PTHR11081:SF9">
    <property type="entry name" value="FLAP ENDONUCLEASE 1"/>
    <property type="match status" value="1"/>
</dbReference>
<dbReference type="PANTHER" id="PTHR11081">
    <property type="entry name" value="FLAP ENDONUCLEASE FAMILY MEMBER"/>
    <property type="match status" value="1"/>
</dbReference>
<dbReference type="Pfam" id="PF00867">
    <property type="entry name" value="XPG_I"/>
    <property type="match status" value="1"/>
</dbReference>
<dbReference type="Pfam" id="PF00752">
    <property type="entry name" value="XPG_N"/>
    <property type="match status" value="1"/>
</dbReference>
<dbReference type="PRINTS" id="PR00853">
    <property type="entry name" value="XPGRADSUPER"/>
</dbReference>
<dbReference type="SMART" id="SM00475">
    <property type="entry name" value="53EXOc"/>
    <property type="match status" value="1"/>
</dbReference>
<dbReference type="SMART" id="SM00279">
    <property type="entry name" value="HhH2"/>
    <property type="match status" value="1"/>
</dbReference>
<dbReference type="SMART" id="SM00484">
    <property type="entry name" value="XPGI"/>
    <property type="match status" value="1"/>
</dbReference>
<dbReference type="SMART" id="SM00485">
    <property type="entry name" value="XPGN"/>
    <property type="match status" value="1"/>
</dbReference>
<dbReference type="SUPFAM" id="SSF47807">
    <property type="entry name" value="5' to 3' exonuclease, C-terminal subdomain"/>
    <property type="match status" value="1"/>
</dbReference>
<dbReference type="SUPFAM" id="SSF88723">
    <property type="entry name" value="PIN domain-like"/>
    <property type="match status" value="1"/>
</dbReference>
<dbReference type="PROSITE" id="PS00841">
    <property type="entry name" value="XPG_1"/>
    <property type="match status" value="1"/>
</dbReference>
<organism>
    <name type="scientific">Yarrowia lipolytica (strain CLIB 122 / E 150)</name>
    <name type="common">Yeast</name>
    <name type="synonym">Candida lipolytica</name>
    <dbReference type="NCBI Taxonomy" id="284591"/>
    <lineage>
        <taxon>Eukaryota</taxon>
        <taxon>Fungi</taxon>
        <taxon>Dikarya</taxon>
        <taxon>Ascomycota</taxon>
        <taxon>Saccharomycotina</taxon>
        <taxon>Dipodascomycetes</taxon>
        <taxon>Dipodascales</taxon>
        <taxon>Dipodascales incertae sedis</taxon>
        <taxon>Yarrowia</taxon>
    </lineage>
</organism>
<proteinExistence type="inferred from homology"/>
<comment type="function">
    <text evidence="1">Structure-specific nuclease with 5'-flap endonuclease and 5'-3' exonuclease activities involved in DNA replication and repair. During DNA replication, cleaves the 5'-overhanging flap structure that is generated by displacement synthesis when DNA polymerase encounters the 5'-end of a downstream Okazaki fragment. It enters the flap from the 5'-end and then tracks to cleave the flap base, leaving a nick for ligation. Also involved in the long patch base excision repair (LP-BER) pathway, by cleaving within the apurinic/apyrimidinic (AP) site-terminated flap. Acts as a genome stabilization factor that prevents flaps from equilibrating into structures that lead to duplications and deletions. Also possesses 5'-3' exonuclease activity on nicked or gapped double-stranded DNA, and exhibits RNase H activity. Also involved in replication and repair of rDNA and in repairing mitochondrial DNA.</text>
</comment>
<comment type="cofactor">
    <cofactor evidence="1">
        <name>Mg(2+)</name>
        <dbReference type="ChEBI" id="CHEBI:18420"/>
    </cofactor>
    <text evidence="1">Binds 2 magnesium ions per subunit. They probably participate in the reaction catalyzed by the enzyme. May bind an additional third magnesium ion after substrate binding.</text>
</comment>
<comment type="subunit">
    <text evidence="1">Interacts with PCNA. Three molecules of FEN1 bind to one PCNA trimer with each molecule binding to one PCNA monomer. PCNA stimulates the nuclease activity without altering cleavage specificity.</text>
</comment>
<comment type="subcellular location">
    <subcellularLocation>
        <location evidence="1">Nucleus</location>
        <location evidence="1">Nucleolus</location>
    </subcellularLocation>
    <subcellularLocation>
        <location evidence="1">Nucleus</location>
        <location evidence="1">Nucleoplasm</location>
    </subcellularLocation>
    <subcellularLocation>
        <location evidence="1">Mitochondrion</location>
    </subcellularLocation>
    <text evidence="1">Resides mostly in the nucleoli and relocalizes to the nucleoplasm upon DNA damage.</text>
</comment>
<comment type="PTM">
    <text evidence="1">Phosphorylated. Phosphorylation upon DNA damage induces relocalization to the nuclear plasma.</text>
</comment>
<comment type="similarity">
    <text evidence="1">Belongs to the XPG/RAD2 endonuclease family. FEN1 subfamily.</text>
</comment>
<protein>
    <recommendedName>
        <fullName evidence="1">Flap endonuclease 1</fullName>
        <shortName evidence="1">FEN-1</shortName>
        <ecNumber evidence="1">3.1.-.-</ecNumber>
    </recommendedName>
    <alternativeName>
        <fullName evidence="1">Flap structure-specific endonuclease 1</fullName>
    </alternativeName>
</protein>
<reference key="1">
    <citation type="journal article" date="2004" name="Nature">
        <title>Genome evolution in yeasts.</title>
        <authorList>
            <person name="Dujon B."/>
            <person name="Sherman D."/>
            <person name="Fischer G."/>
            <person name="Durrens P."/>
            <person name="Casaregola S."/>
            <person name="Lafontaine I."/>
            <person name="de Montigny J."/>
            <person name="Marck C."/>
            <person name="Neuveglise C."/>
            <person name="Talla E."/>
            <person name="Goffard N."/>
            <person name="Frangeul L."/>
            <person name="Aigle M."/>
            <person name="Anthouard V."/>
            <person name="Babour A."/>
            <person name="Barbe V."/>
            <person name="Barnay S."/>
            <person name="Blanchin S."/>
            <person name="Beckerich J.-M."/>
            <person name="Beyne E."/>
            <person name="Bleykasten C."/>
            <person name="Boisrame A."/>
            <person name="Boyer J."/>
            <person name="Cattolico L."/>
            <person name="Confanioleri F."/>
            <person name="de Daruvar A."/>
            <person name="Despons L."/>
            <person name="Fabre E."/>
            <person name="Fairhead C."/>
            <person name="Ferry-Dumazet H."/>
            <person name="Groppi A."/>
            <person name="Hantraye F."/>
            <person name="Hennequin C."/>
            <person name="Jauniaux N."/>
            <person name="Joyet P."/>
            <person name="Kachouri R."/>
            <person name="Kerrest A."/>
            <person name="Koszul R."/>
            <person name="Lemaire M."/>
            <person name="Lesur I."/>
            <person name="Ma L."/>
            <person name="Muller H."/>
            <person name="Nicaud J.-M."/>
            <person name="Nikolski M."/>
            <person name="Oztas S."/>
            <person name="Ozier-Kalogeropoulos O."/>
            <person name="Pellenz S."/>
            <person name="Potier S."/>
            <person name="Richard G.-F."/>
            <person name="Straub M.-L."/>
            <person name="Suleau A."/>
            <person name="Swennen D."/>
            <person name="Tekaia F."/>
            <person name="Wesolowski-Louvel M."/>
            <person name="Westhof E."/>
            <person name="Wirth B."/>
            <person name="Zeniou-Meyer M."/>
            <person name="Zivanovic Y."/>
            <person name="Bolotin-Fukuhara M."/>
            <person name="Thierry A."/>
            <person name="Bouchier C."/>
            <person name="Caudron B."/>
            <person name="Scarpelli C."/>
            <person name="Gaillardin C."/>
            <person name="Weissenbach J."/>
            <person name="Wincker P."/>
            <person name="Souciet J.-L."/>
        </authorList>
    </citation>
    <scope>NUCLEOTIDE SEQUENCE [LARGE SCALE GENOMIC DNA]</scope>
    <source>
        <strain>CLIB 122 / E 150</strain>
    </source>
</reference>
<evidence type="ECO:0000255" key="1">
    <source>
        <dbReference type="HAMAP-Rule" id="MF_03140"/>
    </source>
</evidence>
<evidence type="ECO:0000256" key="2">
    <source>
        <dbReference type="SAM" id="MobiDB-lite"/>
    </source>
</evidence>
<accession>Q6C116</accession>
<gene>
    <name evidence="1" type="primary">FEN1</name>
    <name type="ordered locus">YALI0F20042g</name>
</gene>
<sequence length="389" mass="43446">MGIKGLNKLLMEHCPAALRSSEIKNFGGRKVAIDASMSLYQFVIAVRQADGQQLTNENGETTSHLMGMFYRTLRMVDNGIKPVYVFDGKPPVLKSGELAKRKERREEALKKIEELKQQVEDGEEGEETKEAQEDVTRFEKRTVRVTPEQNDEAKKLLTLMGIPIVEAPCEAEAQCAKLAEAGKVYAAASEDMDTLCFGSPVLLRHLTFSEAKKMPISEINFAKILEGLEMTHAQFIDLCILLGCDYADTIRGVGPQTALKLMKEHGSLEKIVEHIEKNPSGKLKVPENWPYQEVRALLQAPDVLDSSSCDIKWNNPDVEGLVDFLVRDKGFSEDRVRAGAARLMKQVKVKPQARLDGFFKVMPKEGGEKRKADDKKTKGKKPATKKAKK</sequence>
<name>FEN1_YARLI</name>